<sequence length="561" mass="63033">MDEDSVHGDSHLKTCVVLGGRGFIGRSLVSRLLRLGNWTVRVADSGHTLHLDESDSLLEDALSSGRASYHCVDVRDKPQIVKVTEGSYVVFYMGATDLRSHDYFDCYKVIVQGTRNVISACRESGVRKLIYNSTADVVFDGSQPIRDGDESLRRPLKFQSMLTDFKAQAEALIKLANNRDGLLTCALRSSIVFGPGDTEFVPFLVNLAKSGYAKFILGSGENISDFTYSENVSHAHICAVKALDSQMEFVAGKEFFITNLKPVRFWDFVSHIVEGLGYPRPSIKLPVRLVLYVFSLLKWTHEKEGLGSNYDTAHQYALLASSTRTFNCNAAKKHLGYTPVVTLEDGIASTLQWFSRDLEKSDDTIIQSTADQLLGCGKVADILLWRNEKKTFVSFLVLNLFYYWFFFSGNTFTSSAAQLLFIFAVALYGVSFVPSKIFGFQVNKIPPWRFEISESAVRDLSSDIVVVWNQGVRSFKSLSSGGDWIKFFKIAGSLYLLKLIVSRSLAAFLFTVMSFSFTGFFIYEQYELELYHLARIFVECLTFIKRMVIPVSDASSKPMFM</sequence>
<organism>
    <name type="scientific">Arabidopsis thaliana</name>
    <name type="common">Mouse-ear cress</name>
    <dbReference type="NCBI Taxonomy" id="3702"/>
    <lineage>
        <taxon>Eukaryota</taxon>
        <taxon>Viridiplantae</taxon>
        <taxon>Streptophyta</taxon>
        <taxon>Embryophyta</taxon>
        <taxon>Tracheophyta</taxon>
        <taxon>Spermatophyta</taxon>
        <taxon>Magnoliopsida</taxon>
        <taxon>eudicotyledons</taxon>
        <taxon>Gunneridae</taxon>
        <taxon>Pentapetalae</taxon>
        <taxon>rosids</taxon>
        <taxon>malvids</taxon>
        <taxon>Brassicales</taxon>
        <taxon>Brassicaceae</taxon>
        <taxon>Camelineae</taxon>
        <taxon>Arabidopsis</taxon>
    </lineage>
</organism>
<name>HSDD3_ARATH</name>
<comment type="catalytic activity">
    <reaction>
        <text>a 3beta-hydroxysteroid-4alpha-carboxylate + NADP(+) = a 3-oxosteroid + CO2 + NADPH</text>
        <dbReference type="Rhea" id="RHEA:34771"/>
        <dbReference type="ChEBI" id="CHEBI:16526"/>
        <dbReference type="ChEBI" id="CHEBI:47788"/>
        <dbReference type="ChEBI" id="CHEBI:57783"/>
        <dbReference type="ChEBI" id="CHEBI:58349"/>
        <dbReference type="ChEBI" id="CHEBI:136966"/>
        <dbReference type="EC" id="1.1.1.170"/>
    </reaction>
</comment>
<comment type="catalytic activity">
    <reaction>
        <text>a 3beta-hydroxysteroid-4alpha-carboxylate + NAD(+) = a 3-oxosteroid + CO2 + NADH</text>
        <dbReference type="Rhea" id="RHEA:34775"/>
        <dbReference type="ChEBI" id="CHEBI:16526"/>
        <dbReference type="ChEBI" id="CHEBI:47788"/>
        <dbReference type="ChEBI" id="CHEBI:57540"/>
        <dbReference type="ChEBI" id="CHEBI:57945"/>
        <dbReference type="ChEBI" id="CHEBI:136966"/>
        <dbReference type="EC" id="1.1.1.170"/>
    </reaction>
</comment>
<comment type="pathway">
    <text>Steroid biosynthesis; zymosterol biosynthesis; zymosterol from lanosterol: step 4/6.</text>
</comment>
<comment type="subcellular location">
    <subcellularLocation>
        <location evidence="1">Endoplasmic reticulum membrane</location>
        <topology evidence="1">Multi-pass membrane protein</topology>
    </subcellularLocation>
</comment>
<comment type="similarity">
    <text evidence="4">Belongs to the 3-beta-HSD family.</text>
</comment>
<gene>
    <name type="primary">3BETAHSD/D3</name>
    <name type="synonym">RTNLB20</name>
    <name type="ordered locus">At2g43420</name>
    <name type="ORF">T1O24.16</name>
</gene>
<accession>A9X4U2</accession>
<accession>O22856</accession>
<accession>Q94AR9</accession>
<evidence type="ECO:0000250" key="1"/>
<evidence type="ECO:0000255" key="2"/>
<evidence type="ECO:0000255" key="3">
    <source>
        <dbReference type="PROSITE-ProRule" id="PRU00170"/>
    </source>
</evidence>
<evidence type="ECO:0000305" key="4"/>
<feature type="chain" id="PRO_0000371281" description="3beta-hydroxysteroid-dehydrogenase/decarboxylase isoform 3">
    <location>
        <begin position="1"/>
        <end position="561"/>
    </location>
</feature>
<feature type="transmembrane region" description="Helical" evidence="2">
    <location>
        <begin position="392"/>
        <end position="412"/>
    </location>
</feature>
<feature type="transmembrane region" description="Helical" evidence="2">
    <location>
        <begin position="420"/>
        <end position="440"/>
    </location>
</feature>
<feature type="transmembrane region" description="Helical" evidence="2">
    <location>
        <begin position="504"/>
        <end position="524"/>
    </location>
</feature>
<feature type="domain" description="Reticulon" evidence="3">
    <location>
        <begin position="379"/>
        <end position="561"/>
    </location>
</feature>
<feature type="binding site" evidence="1">
    <location>
        <position position="166"/>
    </location>
    <ligand>
        <name>NAD(+)</name>
        <dbReference type="ChEBI" id="CHEBI:57540"/>
    </ligand>
</feature>
<feature type="sequence conflict" description="In Ref. 1; ABD76542." evidence="4" ref="1">
    <original>D</original>
    <variation>G</variation>
    <location>
        <position position="2"/>
    </location>
</feature>
<reference key="1">
    <citation type="journal article" date="2006" name="J. Biol. Chem.">
        <title>Molecular and enzymatic characterizations of novel bifunctional 3beta-hydroxysteroid dehydrogenases/C-4 decarboxylases from Arabidopsis thaliana.</title>
        <authorList>
            <person name="Rahier A."/>
            <person name="Darnet S."/>
            <person name="Bouvier F."/>
            <person name="Camara B."/>
            <person name="Bard M."/>
        </authorList>
    </citation>
    <scope>NUCLEOTIDE SEQUENCE [MRNA]</scope>
    <scope>FUNCTION</scope>
</reference>
<reference key="2">
    <citation type="journal article" date="1999" name="Nature">
        <title>Sequence and analysis of chromosome 2 of the plant Arabidopsis thaliana.</title>
        <authorList>
            <person name="Lin X."/>
            <person name="Kaul S."/>
            <person name="Rounsley S.D."/>
            <person name="Shea T.P."/>
            <person name="Benito M.-I."/>
            <person name="Town C.D."/>
            <person name="Fujii C.Y."/>
            <person name="Mason T.M."/>
            <person name="Bowman C.L."/>
            <person name="Barnstead M.E."/>
            <person name="Feldblyum T.V."/>
            <person name="Buell C.R."/>
            <person name="Ketchum K.A."/>
            <person name="Lee J.J."/>
            <person name="Ronning C.M."/>
            <person name="Koo H.L."/>
            <person name="Moffat K.S."/>
            <person name="Cronin L.A."/>
            <person name="Shen M."/>
            <person name="Pai G."/>
            <person name="Van Aken S."/>
            <person name="Umayam L."/>
            <person name="Tallon L.J."/>
            <person name="Gill J.E."/>
            <person name="Adams M.D."/>
            <person name="Carrera A.J."/>
            <person name="Creasy T.H."/>
            <person name="Goodman H.M."/>
            <person name="Somerville C.R."/>
            <person name="Copenhaver G.P."/>
            <person name="Preuss D."/>
            <person name="Nierman W.C."/>
            <person name="White O."/>
            <person name="Eisen J.A."/>
            <person name="Salzberg S.L."/>
            <person name="Fraser C.M."/>
            <person name="Venter J.C."/>
        </authorList>
    </citation>
    <scope>NUCLEOTIDE SEQUENCE [LARGE SCALE GENOMIC DNA]</scope>
    <source>
        <strain>cv. Columbia</strain>
    </source>
</reference>
<reference key="3">
    <citation type="journal article" date="2017" name="Plant J.">
        <title>Araport11: a complete reannotation of the Arabidopsis thaliana reference genome.</title>
        <authorList>
            <person name="Cheng C.Y."/>
            <person name="Krishnakumar V."/>
            <person name="Chan A.P."/>
            <person name="Thibaud-Nissen F."/>
            <person name="Schobel S."/>
            <person name="Town C.D."/>
        </authorList>
    </citation>
    <scope>GENOME REANNOTATION</scope>
    <source>
        <strain>cv. Columbia</strain>
    </source>
</reference>
<reference key="4">
    <citation type="journal article" date="2002" name="Science">
        <title>Functional annotation of a full-length Arabidopsis cDNA collection.</title>
        <authorList>
            <person name="Seki M."/>
            <person name="Narusaka M."/>
            <person name="Kamiya A."/>
            <person name="Ishida J."/>
            <person name="Satou M."/>
            <person name="Sakurai T."/>
            <person name="Nakajima M."/>
            <person name="Enju A."/>
            <person name="Akiyama K."/>
            <person name="Oono Y."/>
            <person name="Muramatsu M."/>
            <person name="Hayashizaki Y."/>
            <person name="Kawai J."/>
            <person name="Carninci P."/>
            <person name="Itoh M."/>
            <person name="Ishii Y."/>
            <person name="Arakawa T."/>
            <person name="Shibata K."/>
            <person name="Shinagawa A."/>
            <person name="Shinozaki K."/>
        </authorList>
    </citation>
    <scope>NUCLEOTIDE SEQUENCE [LARGE SCALE MRNA]</scope>
    <source>
        <strain>cv. Columbia</strain>
    </source>
</reference>
<reference key="5">
    <citation type="journal article" date="2003" name="Science">
        <title>Empirical analysis of transcriptional activity in the Arabidopsis genome.</title>
        <authorList>
            <person name="Yamada K."/>
            <person name="Lim J."/>
            <person name="Dale J.M."/>
            <person name="Chen H."/>
            <person name="Shinn P."/>
            <person name="Palm C.J."/>
            <person name="Southwick A.M."/>
            <person name="Wu H.C."/>
            <person name="Kim C.J."/>
            <person name="Nguyen M."/>
            <person name="Pham P.K."/>
            <person name="Cheuk R.F."/>
            <person name="Karlin-Newmann G."/>
            <person name="Liu S.X."/>
            <person name="Lam B."/>
            <person name="Sakano H."/>
            <person name="Wu T."/>
            <person name="Yu G."/>
            <person name="Miranda M."/>
            <person name="Quach H.L."/>
            <person name="Tripp M."/>
            <person name="Chang C.H."/>
            <person name="Lee J.M."/>
            <person name="Toriumi M.J."/>
            <person name="Chan M.M."/>
            <person name="Tang C.C."/>
            <person name="Onodera C.S."/>
            <person name="Deng J.M."/>
            <person name="Akiyama K."/>
            <person name="Ansari Y."/>
            <person name="Arakawa T."/>
            <person name="Banh J."/>
            <person name="Banno F."/>
            <person name="Bowser L."/>
            <person name="Brooks S.Y."/>
            <person name="Carninci P."/>
            <person name="Chao Q."/>
            <person name="Choy N."/>
            <person name="Enju A."/>
            <person name="Goldsmith A.D."/>
            <person name="Gurjal M."/>
            <person name="Hansen N.F."/>
            <person name="Hayashizaki Y."/>
            <person name="Johnson-Hopson C."/>
            <person name="Hsuan V.W."/>
            <person name="Iida K."/>
            <person name="Karnes M."/>
            <person name="Khan S."/>
            <person name="Koesema E."/>
            <person name="Ishida J."/>
            <person name="Jiang P.X."/>
            <person name="Jones T."/>
            <person name="Kawai J."/>
            <person name="Kamiya A."/>
            <person name="Meyers C."/>
            <person name="Nakajima M."/>
            <person name="Narusaka M."/>
            <person name="Seki M."/>
            <person name="Sakurai T."/>
            <person name="Satou M."/>
            <person name="Tamse R."/>
            <person name="Vaysberg M."/>
            <person name="Wallender E.K."/>
            <person name="Wong C."/>
            <person name="Yamamura Y."/>
            <person name="Yuan S."/>
            <person name="Shinozaki K."/>
            <person name="Davis R.W."/>
            <person name="Theologis A."/>
            <person name="Ecker J.R."/>
        </authorList>
    </citation>
    <scope>NUCLEOTIDE SEQUENCE [LARGE SCALE MRNA]</scope>
    <source>
        <strain>cv. Columbia</strain>
    </source>
</reference>
<reference key="6">
    <citation type="journal article" date="2007" name="FEBS Lett.">
        <title>Reticulon-like proteins in Arabidopsis thaliana: structural organization and ER localization.</title>
        <authorList>
            <person name="Nziengui H."/>
            <person name="Bouhidel K."/>
            <person name="Pillon D."/>
            <person name="Der C."/>
            <person name="Marty F."/>
            <person name="Schoefs B."/>
        </authorList>
    </citation>
    <scope>GENE FAMILY</scope>
    <scope>NOMENCLATURE</scope>
</reference>
<keyword id="KW-0256">Endoplasmic reticulum</keyword>
<keyword id="KW-0444">Lipid biosynthesis</keyword>
<keyword id="KW-0443">Lipid metabolism</keyword>
<keyword id="KW-0472">Membrane</keyword>
<keyword id="KW-0520">NAD</keyword>
<keyword id="KW-0560">Oxidoreductase</keyword>
<keyword id="KW-1185">Reference proteome</keyword>
<keyword id="KW-0752">Steroid biosynthesis</keyword>
<keyword id="KW-0753">Steroid metabolism</keyword>
<keyword id="KW-0756">Sterol biosynthesis</keyword>
<keyword id="KW-1207">Sterol metabolism</keyword>
<keyword id="KW-0812">Transmembrane</keyword>
<keyword id="KW-1133">Transmembrane helix</keyword>
<protein>
    <recommendedName>
        <fullName>3beta-hydroxysteroid-dehydrogenase/decarboxylase isoform 3</fullName>
        <shortName>At3BETAHSD/D3</shortName>
        <ecNumber>1.1.1.170</ecNumber>
    </recommendedName>
    <alternativeName>
        <fullName>4alpha-carboxysterol-C3-dehydrogenase/C4-decarboxylase isoform 1-3</fullName>
    </alternativeName>
    <alternativeName>
        <fullName>Reticulon-like protein B20</fullName>
        <shortName>AtRTNLB20</shortName>
    </alternativeName>
    <alternativeName>
        <fullName>Sterol-4-alpha-carboxylate 3-dehydrogenase 3, decarboxylating</fullName>
    </alternativeName>
</protein>
<dbReference type="EC" id="1.1.1.170"/>
<dbReference type="EMBL" id="DQ415280">
    <property type="protein sequence ID" value="ABD76542.1"/>
    <property type="molecule type" value="mRNA"/>
</dbReference>
<dbReference type="EMBL" id="AC002335">
    <property type="protein sequence ID" value="AAB64337.2"/>
    <property type="molecule type" value="Genomic_DNA"/>
</dbReference>
<dbReference type="EMBL" id="CP002685">
    <property type="protein sequence ID" value="AEC10266.1"/>
    <property type="molecule type" value="Genomic_DNA"/>
</dbReference>
<dbReference type="EMBL" id="AK117930">
    <property type="protein sequence ID" value="BAC42568.1"/>
    <property type="molecule type" value="mRNA"/>
</dbReference>
<dbReference type="EMBL" id="AY045841">
    <property type="protein sequence ID" value="AAK76515.1"/>
    <property type="molecule type" value="mRNA"/>
</dbReference>
<dbReference type="PIR" id="H84865">
    <property type="entry name" value="H84865"/>
</dbReference>
<dbReference type="RefSeq" id="NP_565998.1">
    <property type="nucleotide sequence ID" value="NM_129903.3"/>
</dbReference>
<dbReference type="SMR" id="A9X4U2"/>
<dbReference type="BioGRID" id="4279">
    <property type="interactions" value="66"/>
</dbReference>
<dbReference type="FunCoup" id="A9X4U2">
    <property type="interactions" value="2631"/>
</dbReference>
<dbReference type="IntAct" id="A9X4U2">
    <property type="interactions" value="66"/>
</dbReference>
<dbReference type="STRING" id="3702.A9X4U2"/>
<dbReference type="PaxDb" id="3702-AT2G43420.1"/>
<dbReference type="ProteomicsDB" id="230251"/>
<dbReference type="EnsemblPlants" id="AT2G43420.1">
    <property type="protein sequence ID" value="AT2G43420.1"/>
    <property type="gene ID" value="AT2G43420"/>
</dbReference>
<dbReference type="GeneID" id="818943"/>
<dbReference type="Gramene" id="AT2G43420.1">
    <property type="protein sequence ID" value="AT2G43420.1"/>
    <property type="gene ID" value="AT2G43420"/>
</dbReference>
<dbReference type="KEGG" id="ath:AT2G43420"/>
<dbReference type="Araport" id="AT2G43420"/>
<dbReference type="TAIR" id="AT2G43420">
    <property type="gene designation" value="RTN20"/>
</dbReference>
<dbReference type="eggNOG" id="KOG1430">
    <property type="taxonomic scope" value="Eukaryota"/>
</dbReference>
<dbReference type="HOGENOM" id="CLU_007383_6_8_1"/>
<dbReference type="InParanoid" id="A9X4U2"/>
<dbReference type="OMA" id="DFTYSEN"/>
<dbReference type="PhylomeDB" id="A9X4U2"/>
<dbReference type="BioCyc" id="ARA:AT2G43420-MONOMER"/>
<dbReference type="UniPathway" id="UPA00770">
    <property type="reaction ID" value="UER00757"/>
</dbReference>
<dbReference type="PRO" id="PR:A9X4U2"/>
<dbReference type="Proteomes" id="UP000006548">
    <property type="component" value="Chromosome 2"/>
</dbReference>
<dbReference type="ExpressionAtlas" id="A9X4U2">
    <property type="expression patterns" value="baseline and differential"/>
</dbReference>
<dbReference type="GO" id="GO:0005783">
    <property type="term" value="C:endoplasmic reticulum"/>
    <property type="evidence" value="ECO:0000314"/>
    <property type="project" value="TAIR"/>
</dbReference>
<dbReference type="GO" id="GO:0005789">
    <property type="term" value="C:endoplasmic reticulum membrane"/>
    <property type="evidence" value="ECO:0007669"/>
    <property type="project" value="UniProtKB-SubCell"/>
</dbReference>
<dbReference type="GO" id="GO:0009506">
    <property type="term" value="C:plasmodesma"/>
    <property type="evidence" value="ECO:0007005"/>
    <property type="project" value="TAIR"/>
</dbReference>
<dbReference type="GO" id="GO:0102175">
    <property type="term" value="F:3-beta-hydroxysteroid dehydrogenase (NAD+)/C4-decarboxylase activity"/>
    <property type="evidence" value="ECO:0007669"/>
    <property type="project" value="RHEA"/>
</dbReference>
<dbReference type="GO" id="GO:0016126">
    <property type="term" value="P:sterol biosynthetic process"/>
    <property type="evidence" value="ECO:0007669"/>
    <property type="project" value="UniProtKB-KW"/>
</dbReference>
<dbReference type="CDD" id="cd09813">
    <property type="entry name" value="3b-HSD-NSDHL-like_SDR_e"/>
    <property type="match status" value="1"/>
</dbReference>
<dbReference type="FunFam" id="3.40.50.720:FF:000273">
    <property type="entry name" value="Reticulon-like protein"/>
    <property type="match status" value="1"/>
</dbReference>
<dbReference type="Gene3D" id="3.40.50.720">
    <property type="entry name" value="NAD(P)-binding Rossmann-like Domain"/>
    <property type="match status" value="1"/>
</dbReference>
<dbReference type="InterPro" id="IPR002225">
    <property type="entry name" value="3Beta_OHSteriod_DH/Estase"/>
</dbReference>
<dbReference type="InterPro" id="IPR050177">
    <property type="entry name" value="Lipid_A_modif_metabolic_enz"/>
</dbReference>
<dbReference type="InterPro" id="IPR036291">
    <property type="entry name" value="NAD(P)-bd_dom_sf"/>
</dbReference>
<dbReference type="InterPro" id="IPR003388">
    <property type="entry name" value="Reticulon"/>
</dbReference>
<dbReference type="PANTHER" id="PTHR43245">
    <property type="entry name" value="BIFUNCTIONAL POLYMYXIN RESISTANCE PROTEIN ARNA"/>
    <property type="match status" value="1"/>
</dbReference>
<dbReference type="PANTHER" id="PTHR43245:SF51">
    <property type="entry name" value="SHORT CHAIN DEHYDROGENASE_REDUCTASE FAMILY 42E, MEMBER 2"/>
    <property type="match status" value="1"/>
</dbReference>
<dbReference type="Pfam" id="PF01073">
    <property type="entry name" value="3Beta_HSD"/>
    <property type="match status" value="1"/>
</dbReference>
<dbReference type="Pfam" id="PF02453">
    <property type="entry name" value="Reticulon"/>
    <property type="match status" value="1"/>
</dbReference>
<dbReference type="SUPFAM" id="SSF51735">
    <property type="entry name" value="NAD(P)-binding Rossmann-fold domains"/>
    <property type="match status" value="1"/>
</dbReference>
<dbReference type="PROSITE" id="PS50845">
    <property type="entry name" value="RETICULON"/>
    <property type="match status" value="1"/>
</dbReference>
<proteinExistence type="evidence at transcript level"/>